<reference key="1">
    <citation type="journal article" date="2002" name="Proc. Natl. Acad. Sci. U.S.A.">
        <title>Complete genome sequence and comparative genomic analysis of an emerging human pathogen, serotype V Streptococcus agalactiae.</title>
        <authorList>
            <person name="Tettelin H."/>
            <person name="Masignani V."/>
            <person name="Cieslewicz M.J."/>
            <person name="Eisen J.A."/>
            <person name="Peterson S.N."/>
            <person name="Wessels M.R."/>
            <person name="Paulsen I.T."/>
            <person name="Nelson K.E."/>
            <person name="Margarit I."/>
            <person name="Read T.D."/>
            <person name="Madoff L.C."/>
            <person name="Wolf A.M."/>
            <person name="Beanan M.J."/>
            <person name="Brinkac L.M."/>
            <person name="Daugherty S.C."/>
            <person name="DeBoy R.T."/>
            <person name="Durkin A.S."/>
            <person name="Kolonay J.F."/>
            <person name="Madupu R."/>
            <person name="Lewis M.R."/>
            <person name="Radune D."/>
            <person name="Fedorova N.B."/>
            <person name="Scanlan D."/>
            <person name="Khouri H.M."/>
            <person name="Mulligan S."/>
            <person name="Carty H.A."/>
            <person name="Cline R.T."/>
            <person name="Van Aken S.E."/>
            <person name="Gill J."/>
            <person name="Scarselli M."/>
            <person name="Mora M."/>
            <person name="Iacobini E.T."/>
            <person name="Brettoni C."/>
            <person name="Galli G."/>
            <person name="Mariani M."/>
            <person name="Vegni F."/>
            <person name="Maione D."/>
            <person name="Rinaudo D."/>
            <person name="Rappuoli R."/>
            <person name="Telford J.L."/>
            <person name="Kasper D.L."/>
            <person name="Grandi G."/>
            <person name="Fraser C.M."/>
        </authorList>
    </citation>
    <scope>NUCLEOTIDE SEQUENCE [LARGE SCALE GENOMIC DNA]</scope>
    <source>
        <strain>ATCC BAA-611 / 2603 V/R</strain>
    </source>
</reference>
<organism>
    <name type="scientific">Streptococcus agalactiae serotype V (strain ATCC BAA-611 / 2603 V/R)</name>
    <dbReference type="NCBI Taxonomy" id="208435"/>
    <lineage>
        <taxon>Bacteria</taxon>
        <taxon>Bacillati</taxon>
        <taxon>Bacillota</taxon>
        <taxon>Bacilli</taxon>
        <taxon>Lactobacillales</taxon>
        <taxon>Streptococcaceae</taxon>
        <taxon>Streptococcus</taxon>
    </lineage>
</organism>
<name>SECA1_STRA5</name>
<comment type="function">
    <text evidence="1">Part of the Sec protein translocase complex. Interacts with the SecYEG preprotein conducting channel. Has a central role in coupling the hydrolysis of ATP to the transfer of proteins into and across the cell membrane, serving as an ATP-driven molecular motor driving the stepwise translocation of polypeptide chains across the membrane.</text>
</comment>
<comment type="catalytic activity">
    <reaction evidence="1">
        <text>ATP + H2O + cellular proteinSide 1 = ADP + phosphate + cellular proteinSide 2.</text>
        <dbReference type="EC" id="7.4.2.8"/>
    </reaction>
</comment>
<comment type="cofactor">
    <cofactor evidence="1">
        <name>Zn(2+)</name>
        <dbReference type="ChEBI" id="CHEBI:29105"/>
    </cofactor>
    <text evidence="1">May bind 1 zinc ion per subunit.</text>
</comment>
<comment type="subunit">
    <text evidence="1">Monomer and homodimer. Part of the essential Sec protein translocation apparatus which comprises SecA, SecYEG and auxiliary proteins SecDF. Other proteins may also be involved.</text>
</comment>
<comment type="subcellular location">
    <subcellularLocation>
        <location evidence="1">Cell membrane</location>
        <topology evidence="1">Peripheral membrane protein</topology>
        <orientation evidence="1">Cytoplasmic side</orientation>
    </subcellularLocation>
    <subcellularLocation>
        <location evidence="1">Cytoplasm</location>
    </subcellularLocation>
    <text evidence="1">Distribution is 50-50.</text>
</comment>
<comment type="similarity">
    <text evidence="1">Belongs to the SecA family.</text>
</comment>
<evidence type="ECO:0000255" key="1">
    <source>
        <dbReference type="HAMAP-Rule" id="MF_01382"/>
    </source>
</evidence>
<accession>Q8DY07</accession>
<keyword id="KW-0067">ATP-binding</keyword>
<keyword id="KW-1003">Cell membrane</keyword>
<keyword id="KW-0963">Cytoplasm</keyword>
<keyword id="KW-0472">Membrane</keyword>
<keyword id="KW-0479">Metal-binding</keyword>
<keyword id="KW-0547">Nucleotide-binding</keyword>
<keyword id="KW-0653">Protein transport</keyword>
<keyword id="KW-1185">Reference proteome</keyword>
<keyword id="KW-1278">Translocase</keyword>
<keyword id="KW-0811">Translocation</keyword>
<keyword id="KW-0813">Transport</keyword>
<keyword id="KW-0862">Zinc</keyword>
<proteinExistence type="inferred from homology"/>
<protein>
    <recommendedName>
        <fullName evidence="1">Protein translocase subunit SecA 1</fullName>
        <ecNumber evidence="1">7.4.2.8</ecNumber>
    </recommendedName>
</protein>
<dbReference type="EC" id="7.4.2.8" evidence="1"/>
<dbReference type="EMBL" id="AE009948">
    <property type="protein sequence ID" value="AAN00551.1"/>
    <property type="molecule type" value="Genomic_DNA"/>
</dbReference>
<dbReference type="RefSeq" id="NP_688678.1">
    <property type="nucleotide sequence ID" value="NC_004116.1"/>
</dbReference>
<dbReference type="SMR" id="Q8DY07"/>
<dbReference type="STRING" id="208435.SAG1687"/>
<dbReference type="KEGG" id="sag:SAG1687"/>
<dbReference type="PATRIC" id="fig|208435.3.peg.1696"/>
<dbReference type="HOGENOM" id="CLU_005314_3_0_9"/>
<dbReference type="OrthoDB" id="9805579at2"/>
<dbReference type="Proteomes" id="UP000000821">
    <property type="component" value="Chromosome"/>
</dbReference>
<dbReference type="GO" id="GO:0031522">
    <property type="term" value="C:cell envelope Sec protein transport complex"/>
    <property type="evidence" value="ECO:0007669"/>
    <property type="project" value="TreeGrafter"/>
</dbReference>
<dbReference type="GO" id="GO:0005829">
    <property type="term" value="C:cytosol"/>
    <property type="evidence" value="ECO:0007669"/>
    <property type="project" value="TreeGrafter"/>
</dbReference>
<dbReference type="GO" id="GO:0005886">
    <property type="term" value="C:plasma membrane"/>
    <property type="evidence" value="ECO:0007669"/>
    <property type="project" value="UniProtKB-SubCell"/>
</dbReference>
<dbReference type="GO" id="GO:0005524">
    <property type="term" value="F:ATP binding"/>
    <property type="evidence" value="ECO:0007669"/>
    <property type="project" value="UniProtKB-UniRule"/>
</dbReference>
<dbReference type="GO" id="GO:0046872">
    <property type="term" value="F:metal ion binding"/>
    <property type="evidence" value="ECO:0007669"/>
    <property type="project" value="UniProtKB-KW"/>
</dbReference>
<dbReference type="GO" id="GO:0008564">
    <property type="term" value="F:protein-exporting ATPase activity"/>
    <property type="evidence" value="ECO:0007669"/>
    <property type="project" value="UniProtKB-EC"/>
</dbReference>
<dbReference type="GO" id="GO:0065002">
    <property type="term" value="P:intracellular protein transmembrane transport"/>
    <property type="evidence" value="ECO:0007669"/>
    <property type="project" value="UniProtKB-UniRule"/>
</dbReference>
<dbReference type="GO" id="GO:0017038">
    <property type="term" value="P:protein import"/>
    <property type="evidence" value="ECO:0007669"/>
    <property type="project" value="InterPro"/>
</dbReference>
<dbReference type="GO" id="GO:0006605">
    <property type="term" value="P:protein targeting"/>
    <property type="evidence" value="ECO:0007669"/>
    <property type="project" value="UniProtKB-UniRule"/>
</dbReference>
<dbReference type="GO" id="GO:0043952">
    <property type="term" value="P:protein transport by the Sec complex"/>
    <property type="evidence" value="ECO:0007669"/>
    <property type="project" value="TreeGrafter"/>
</dbReference>
<dbReference type="CDD" id="cd17928">
    <property type="entry name" value="DEXDc_SecA"/>
    <property type="match status" value="1"/>
</dbReference>
<dbReference type="CDD" id="cd18803">
    <property type="entry name" value="SF2_C_secA"/>
    <property type="match status" value="1"/>
</dbReference>
<dbReference type="FunFam" id="1.10.3060.10:FF:000002">
    <property type="entry name" value="Preprotein translocase subunit SecA"/>
    <property type="match status" value="1"/>
</dbReference>
<dbReference type="FunFam" id="3.40.50.300:FF:000429">
    <property type="entry name" value="Preprotein translocase subunit SecA"/>
    <property type="match status" value="1"/>
</dbReference>
<dbReference type="FunFam" id="3.90.1440.10:FF:000001">
    <property type="entry name" value="Preprotein translocase subunit SecA"/>
    <property type="match status" value="1"/>
</dbReference>
<dbReference type="Gene3D" id="1.10.3060.10">
    <property type="entry name" value="Helical scaffold and wing domains of SecA"/>
    <property type="match status" value="1"/>
</dbReference>
<dbReference type="Gene3D" id="3.40.50.300">
    <property type="entry name" value="P-loop containing nucleotide triphosphate hydrolases"/>
    <property type="match status" value="3"/>
</dbReference>
<dbReference type="Gene3D" id="3.90.1440.10">
    <property type="entry name" value="SecA, preprotein cross-linking domain"/>
    <property type="match status" value="1"/>
</dbReference>
<dbReference type="HAMAP" id="MF_01382">
    <property type="entry name" value="SecA"/>
    <property type="match status" value="1"/>
</dbReference>
<dbReference type="InterPro" id="IPR014001">
    <property type="entry name" value="Helicase_ATP-bd"/>
</dbReference>
<dbReference type="InterPro" id="IPR001650">
    <property type="entry name" value="Helicase_C-like"/>
</dbReference>
<dbReference type="InterPro" id="IPR027417">
    <property type="entry name" value="P-loop_NTPase"/>
</dbReference>
<dbReference type="InterPro" id="IPR004027">
    <property type="entry name" value="SEC_C_motif"/>
</dbReference>
<dbReference type="InterPro" id="IPR000185">
    <property type="entry name" value="SecA"/>
</dbReference>
<dbReference type="InterPro" id="IPR020937">
    <property type="entry name" value="SecA_CS"/>
</dbReference>
<dbReference type="InterPro" id="IPR011115">
    <property type="entry name" value="SecA_DEAD"/>
</dbReference>
<dbReference type="InterPro" id="IPR014018">
    <property type="entry name" value="SecA_motor_DEAD"/>
</dbReference>
<dbReference type="InterPro" id="IPR011130">
    <property type="entry name" value="SecA_preprotein_X-link_dom"/>
</dbReference>
<dbReference type="InterPro" id="IPR044722">
    <property type="entry name" value="SecA_SF2_C"/>
</dbReference>
<dbReference type="InterPro" id="IPR011116">
    <property type="entry name" value="SecA_Wing/Scaffold"/>
</dbReference>
<dbReference type="InterPro" id="IPR036266">
    <property type="entry name" value="SecA_Wing/Scaffold_sf"/>
</dbReference>
<dbReference type="InterPro" id="IPR036670">
    <property type="entry name" value="SecA_X-link_sf"/>
</dbReference>
<dbReference type="NCBIfam" id="NF006630">
    <property type="entry name" value="PRK09200.1"/>
    <property type="match status" value="1"/>
</dbReference>
<dbReference type="NCBIfam" id="TIGR00963">
    <property type="entry name" value="secA"/>
    <property type="match status" value="1"/>
</dbReference>
<dbReference type="PANTHER" id="PTHR30612:SF0">
    <property type="entry name" value="CHLOROPLAST PROTEIN-TRANSPORTING ATPASE"/>
    <property type="match status" value="1"/>
</dbReference>
<dbReference type="PANTHER" id="PTHR30612">
    <property type="entry name" value="SECA INNER MEMBRANE COMPONENT OF SEC PROTEIN SECRETION SYSTEM"/>
    <property type="match status" value="1"/>
</dbReference>
<dbReference type="Pfam" id="PF21090">
    <property type="entry name" value="P-loop_SecA"/>
    <property type="match status" value="2"/>
</dbReference>
<dbReference type="Pfam" id="PF02810">
    <property type="entry name" value="SEC-C"/>
    <property type="match status" value="1"/>
</dbReference>
<dbReference type="Pfam" id="PF07517">
    <property type="entry name" value="SecA_DEAD"/>
    <property type="match status" value="1"/>
</dbReference>
<dbReference type="Pfam" id="PF01043">
    <property type="entry name" value="SecA_PP_bind"/>
    <property type="match status" value="1"/>
</dbReference>
<dbReference type="Pfam" id="PF07516">
    <property type="entry name" value="SecA_SW"/>
    <property type="match status" value="1"/>
</dbReference>
<dbReference type="PRINTS" id="PR00906">
    <property type="entry name" value="SECA"/>
</dbReference>
<dbReference type="SMART" id="SM00957">
    <property type="entry name" value="SecA_DEAD"/>
    <property type="match status" value="1"/>
</dbReference>
<dbReference type="SMART" id="SM00958">
    <property type="entry name" value="SecA_PP_bind"/>
    <property type="match status" value="1"/>
</dbReference>
<dbReference type="SUPFAM" id="SSF81886">
    <property type="entry name" value="Helical scaffold and wing domains of SecA"/>
    <property type="match status" value="1"/>
</dbReference>
<dbReference type="SUPFAM" id="SSF52540">
    <property type="entry name" value="P-loop containing nucleoside triphosphate hydrolases"/>
    <property type="match status" value="2"/>
</dbReference>
<dbReference type="SUPFAM" id="SSF81767">
    <property type="entry name" value="Pre-protein crosslinking domain of SecA"/>
    <property type="match status" value="1"/>
</dbReference>
<dbReference type="PROSITE" id="PS01312">
    <property type="entry name" value="SECA"/>
    <property type="match status" value="1"/>
</dbReference>
<dbReference type="PROSITE" id="PS51196">
    <property type="entry name" value="SECA_MOTOR_DEAD"/>
    <property type="match status" value="1"/>
</dbReference>
<gene>
    <name evidence="1" type="primary">secA1</name>
    <name type="ordered locus">SAG1687</name>
</gene>
<feature type="chain" id="PRO_0000318439" description="Protein translocase subunit SecA 1">
    <location>
        <begin position="1"/>
        <end position="842"/>
    </location>
</feature>
<feature type="binding site" evidence="1">
    <location>
        <position position="85"/>
    </location>
    <ligand>
        <name>ATP</name>
        <dbReference type="ChEBI" id="CHEBI:30616"/>
    </ligand>
</feature>
<feature type="binding site" evidence="1">
    <location>
        <begin position="103"/>
        <end position="107"/>
    </location>
    <ligand>
        <name>ATP</name>
        <dbReference type="ChEBI" id="CHEBI:30616"/>
    </ligand>
</feature>
<feature type="binding site" evidence="1">
    <location>
        <position position="493"/>
    </location>
    <ligand>
        <name>ATP</name>
        <dbReference type="ChEBI" id="CHEBI:30616"/>
    </ligand>
</feature>
<feature type="binding site" evidence="1">
    <location>
        <position position="824"/>
    </location>
    <ligand>
        <name>Zn(2+)</name>
        <dbReference type="ChEBI" id="CHEBI:29105"/>
    </ligand>
</feature>
<feature type="binding site" evidence="1">
    <location>
        <position position="826"/>
    </location>
    <ligand>
        <name>Zn(2+)</name>
        <dbReference type="ChEBI" id="CHEBI:29105"/>
    </ligand>
</feature>
<feature type="binding site" evidence="1">
    <location>
        <position position="835"/>
    </location>
    <ligand>
        <name>Zn(2+)</name>
        <dbReference type="ChEBI" id="CHEBI:29105"/>
    </ligand>
</feature>
<feature type="binding site" evidence="1">
    <location>
        <position position="836"/>
    </location>
    <ligand>
        <name>Zn(2+)</name>
        <dbReference type="ChEBI" id="CHEBI:29105"/>
    </ligand>
</feature>
<sequence length="842" mass="95313">MANILRTVIENDKGELKKLDKIAKKVDSYADHMAALSDEALQAKTPEFKERYQNGETLDQLLPEAFAVVREASKRVLGLYPYHVQIMGGIVLHHGDIPEMRTGEGKTLTATMPVYLNAISGLGVHVITVNEYLSTRDATEMGEVYSWLGLSVGINLAAKSPFEKREAYNCDITYSTNAEVGFDYLRDNMVVRQEDMVQRPLNYALVDEVDSVLIDEARTPLIVSGPVSSEMNQLYTRADMFVKTLNSDDYIIDVPTKTIGLSDTGIDKAENYFHLNNLYDLENVALTHYIDNALRANYIMLLNIDYVVSEEQEILIVDQFTGRTMEGRRFSDGLHQAIEAKESVPIQEESKTSASITYQNMFRMYHKLAGMTGTGKTEEEEFREIYNMRVIPIPTNRPVQRIDHSDLLYPTLDSKFRAVVADVKERYEQGQPVLVGTVAVETSDLISRKLVAAGVPHEVLNAKNHFKEAQIIMNAGQRGAVTIATNMAGRGTDIKLGEGVRELGGLCVIGTERHESRRIDNQLRGRSGRQGDPGESQFYLSLEDDLMRRFGTDRIKVVLERMNLAEDDTVIKSKMLTRQVESAQRRVEGNNYDTRKQVLQYDDVMREQREIIYANRREVITAERDLGPELKGMIKRTIKRAVDAHSRSDKNTAAEAIVNFARSALLDEEAITVSELRGLKEAEIKELLYERALAVYEQQIAKLKDPEAIIEFQKVLILMVVDNQWTEHIDALDQLRNSVGLRGYAQNNPIVEYQSEGFRMFQDMIGSIEFDVTRTLMKAQIHEQERERASQHATTTAEQNISAQHVPMNNESPEYQGIKRNDKCPCGSGMKFKNCHGLRCLQ</sequence>